<comment type="function">
    <text evidence="1">Endonuclease that specifically degrades the RNA of RNA-DNA hybrids.</text>
</comment>
<comment type="catalytic activity">
    <reaction evidence="1">
        <text>Endonucleolytic cleavage to 5'-phosphomonoester.</text>
        <dbReference type="EC" id="3.1.26.4"/>
    </reaction>
</comment>
<comment type="cofactor">
    <cofactor evidence="1">
        <name>Mg(2+)</name>
        <dbReference type="ChEBI" id="CHEBI:18420"/>
    </cofactor>
    <text evidence="1">Binds 1 Mg(2+) ion per subunit. May bind a second metal ion at a regulatory site, or after substrate binding.</text>
</comment>
<comment type="subunit">
    <text evidence="1">Monomer.</text>
</comment>
<comment type="subcellular location">
    <subcellularLocation>
        <location evidence="1">Cytoplasm</location>
    </subcellularLocation>
</comment>
<comment type="similarity">
    <text evidence="1">Belongs to the RNase H family.</text>
</comment>
<evidence type="ECO:0000255" key="1">
    <source>
        <dbReference type="HAMAP-Rule" id="MF_00042"/>
    </source>
</evidence>
<evidence type="ECO:0000255" key="2">
    <source>
        <dbReference type="PROSITE-ProRule" id="PRU00408"/>
    </source>
</evidence>
<accession>Q83GM3</accession>
<organism>
    <name type="scientific">Tropheryma whipplei (strain Twist)</name>
    <name type="common">Whipple's bacillus</name>
    <dbReference type="NCBI Taxonomy" id="203267"/>
    <lineage>
        <taxon>Bacteria</taxon>
        <taxon>Bacillati</taxon>
        <taxon>Actinomycetota</taxon>
        <taxon>Actinomycetes</taxon>
        <taxon>Micrococcales</taxon>
        <taxon>Tropherymataceae</taxon>
        <taxon>Tropheryma</taxon>
    </lineage>
</organism>
<keyword id="KW-0963">Cytoplasm</keyword>
<keyword id="KW-0255">Endonuclease</keyword>
<keyword id="KW-0378">Hydrolase</keyword>
<keyword id="KW-0460">Magnesium</keyword>
<keyword id="KW-0479">Metal-binding</keyword>
<keyword id="KW-0540">Nuclease</keyword>
<keyword id="KW-1185">Reference proteome</keyword>
<sequence>MTNNEIIAATDGSSLANPGPSGWAWYVDENTWDSGGWDIATNNIAELTAVRELLIATRHTDRPILILSDSKYVINSLTKWVYSWKMRKWRKADGKPVLNQEIIQEIDSLMENRNIRMSWVNAHTGHPLNEAADSLARQAANNFSTRSAHIPGPGWTERSAK</sequence>
<name>RNH_TROWT</name>
<dbReference type="EC" id="3.1.26.4" evidence="1"/>
<dbReference type="EMBL" id="AE014184">
    <property type="protein sequence ID" value="AAO44336.1"/>
    <property type="molecule type" value="Genomic_DNA"/>
</dbReference>
<dbReference type="RefSeq" id="WP_011096478.1">
    <property type="nucleotide sequence ID" value="NC_004572.3"/>
</dbReference>
<dbReference type="SMR" id="Q83GM3"/>
<dbReference type="STRING" id="203267.TWT_239"/>
<dbReference type="KEGG" id="twh:TWT_239"/>
<dbReference type="eggNOG" id="COG0328">
    <property type="taxonomic scope" value="Bacteria"/>
</dbReference>
<dbReference type="HOGENOM" id="CLU_030894_6_1_11"/>
<dbReference type="OrthoDB" id="7845843at2"/>
<dbReference type="Proteomes" id="UP000002200">
    <property type="component" value="Chromosome"/>
</dbReference>
<dbReference type="GO" id="GO:0005737">
    <property type="term" value="C:cytoplasm"/>
    <property type="evidence" value="ECO:0007669"/>
    <property type="project" value="UniProtKB-SubCell"/>
</dbReference>
<dbReference type="GO" id="GO:0000287">
    <property type="term" value="F:magnesium ion binding"/>
    <property type="evidence" value="ECO:0007669"/>
    <property type="project" value="UniProtKB-UniRule"/>
</dbReference>
<dbReference type="GO" id="GO:0003676">
    <property type="term" value="F:nucleic acid binding"/>
    <property type="evidence" value="ECO:0007669"/>
    <property type="project" value="InterPro"/>
</dbReference>
<dbReference type="GO" id="GO:0004523">
    <property type="term" value="F:RNA-DNA hybrid ribonuclease activity"/>
    <property type="evidence" value="ECO:0007669"/>
    <property type="project" value="UniProtKB-UniRule"/>
</dbReference>
<dbReference type="GO" id="GO:0043137">
    <property type="term" value="P:DNA replication, removal of RNA primer"/>
    <property type="evidence" value="ECO:0007669"/>
    <property type="project" value="TreeGrafter"/>
</dbReference>
<dbReference type="CDD" id="cd09278">
    <property type="entry name" value="RNase_HI_prokaryote_like"/>
    <property type="match status" value="1"/>
</dbReference>
<dbReference type="Gene3D" id="3.30.420.10">
    <property type="entry name" value="Ribonuclease H-like superfamily/Ribonuclease H"/>
    <property type="match status" value="1"/>
</dbReference>
<dbReference type="HAMAP" id="MF_00042">
    <property type="entry name" value="RNase_H"/>
    <property type="match status" value="1"/>
</dbReference>
<dbReference type="InterPro" id="IPR050092">
    <property type="entry name" value="RNase_H"/>
</dbReference>
<dbReference type="InterPro" id="IPR012337">
    <property type="entry name" value="RNaseH-like_sf"/>
</dbReference>
<dbReference type="InterPro" id="IPR002156">
    <property type="entry name" value="RNaseH_domain"/>
</dbReference>
<dbReference type="InterPro" id="IPR036397">
    <property type="entry name" value="RNaseH_sf"/>
</dbReference>
<dbReference type="InterPro" id="IPR022892">
    <property type="entry name" value="RNaseHI"/>
</dbReference>
<dbReference type="NCBIfam" id="NF005116">
    <property type="entry name" value="PRK06548.1"/>
    <property type="match status" value="1"/>
</dbReference>
<dbReference type="PANTHER" id="PTHR10642">
    <property type="entry name" value="RIBONUCLEASE H1"/>
    <property type="match status" value="1"/>
</dbReference>
<dbReference type="PANTHER" id="PTHR10642:SF26">
    <property type="entry name" value="RIBONUCLEASE H1"/>
    <property type="match status" value="1"/>
</dbReference>
<dbReference type="Pfam" id="PF00075">
    <property type="entry name" value="RNase_H"/>
    <property type="match status" value="1"/>
</dbReference>
<dbReference type="SUPFAM" id="SSF53098">
    <property type="entry name" value="Ribonuclease H-like"/>
    <property type="match status" value="1"/>
</dbReference>
<dbReference type="PROSITE" id="PS50879">
    <property type="entry name" value="RNASE_H_1"/>
    <property type="match status" value="1"/>
</dbReference>
<feature type="chain" id="PRO_0000195414" description="Ribonuclease H">
    <location>
        <begin position="1"/>
        <end position="161"/>
    </location>
</feature>
<feature type="domain" description="RNase H type-1" evidence="2">
    <location>
        <begin position="2"/>
        <end position="141"/>
    </location>
</feature>
<feature type="binding site" evidence="1">
    <location>
        <position position="11"/>
    </location>
    <ligand>
        <name>Mg(2+)</name>
        <dbReference type="ChEBI" id="CHEBI:18420"/>
        <label>1</label>
    </ligand>
</feature>
<feature type="binding site" evidence="1">
    <location>
        <position position="11"/>
    </location>
    <ligand>
        <name>Mg(2+)</name>
        <dbReference type="ChEBI" id="CHEBI:18420"/>
        <label>2</label>
    </ligand>
</feature>
<feature type="binding site" evidence="1">
    <location>
        <position position="46"/>
    </location>
    <ligand>
        <name>Mg(2+)</name>
        <dbReference type="ChEBI" id="CHEBI:18420"/>
        <label>1</label>
    </ligand>
</feature>
<feature type="binding site" evidence="1">
    <location>
        <position position="69"/>
    </location>
    <ligand>
        <name>Mg(2+)</name>
        <dbReference type="ChEBI" id="CHEBI:18420"/>
        <label>1</label>
    </ligand>
</feature>
<feature type="binding site" evidence="1">
    <location>
        <position position="133"/>
    </location>
    <ligand>
        <name>Mg(2+)</name>
        <dbReference type="ChEBI" id="CHEBI:18420"/>
        <label>2</label>
    </ligand>
</feature>
<proteinExistence type="inferred from homology"/>
<protein>
    <recommendedName>
        <fullName evidence="1">Ribonuclease H</fullName>
        <shortName evidence="1">RNase H</shortName>
        <ecNumber evidence="1">3.1.26.4</ecNumber>
    </recommendedName>
</protein>
<gene>
    <name evidence="1" type="primary">rnhA</name>
    <name type="ordered locus">TWT_239</name>
</gene>
<reference key="1">
    <citation type="journal article" date="2003" name="Genome Res.">
        <title>Tropheryma whipplei twist: a human pathogenic Actinobacteria with a reduced genome.</title>
        <authorList>
            <person name="Raoult D."/>
            <person name="Ogata H."/>
            <person name="Audic S."/>
            <person name="Robert C."/>
            <person name="Suhre K."/>
            <person name="Drancourt M."/>
            <person name="Claverie J.-M."/>
        </authorList>
    </citation>
    <scope>NUCLEOTIDE SEQUENCE [LARGE SCALE GENOMIC DNA]</scope>
    <source>
        <strain>Twist</strain>
    </source>
</reference>